<comment type="function">
    <text evidence="1">Catalyzes the condensation reaction of fatty acid synthesis by the addition to an acyl acceptor of two carbons from malonyl-ACP. Catalyzes the first condensation reaction which initiates fatty acid synthesis and may therefore play a role in governing the total rate of fatty acid production. Possesses both acetoacetyl-ACP synthase and acetyl transacylase activities. Its substrate specificity determines the biosynthesis of branched-chain and/or straight-chain of fatty acids.</text>
</comment>
<comment type="catalytic activity">
    <reaction evidence="1">
        <text>malonyl-[ACP] + acetyl-CoA + H(+) = 3-oxobutanoyl-[ACP] + CO2 + CoA</text>
        <dbReference type="Rhea" id="RHEA:12080"/>
        <dbReference type="Rhea" id="RHEA-COMP:9623"/>
        <dbReference type="Rhea" id="RHEA-COMP:9625"/>
        <dbReference type="ChEBI" id="CHEBI:15378"/>
        <dbReference type="ChEBI" id="CHEBI:16526"/>
        <dbReference type="ChEBI" id="CHEBI:57287"/>
        <dbReference type="ChEBI" id="CHEBI:57288"/>
        <dbReference type="ChEBI" id="CHEBI:78449"/>
        <dbReference type="ChEBI" id="CHEBI:78450"/>
        <dbReference type="EC" id="2.3.1.180"/>
    </reaction>
</comment>
<comment type="pathway">
    <text evidence="1">Lipid metabolism; fatty acid biosynthesis.</text>
</comment>
<comment type="subunit">
    <text evidence="1">Homodimer.</text>
</comment>
<comment type="subcellular location">
    <subcellularLocation>
        <location evidence="1">Cytoplasm</location>
    </subcellularLocation>
</comment>
<comment type="domain">
    <text evidence="1">The last Arg residue of the ACP-binding site is essential for the weak association between ACP/AcpP and FabH.</text>
</comment>
<comment type="similarity">
    <text evidence="1">Belongs to the thiolase-like superfamily. FabH family.</text>
</comment>
<proteinExistence type="inferred from homology"/>
<name>FABH_STRPD</name>
<gene>
    <name evidence="1" type="primary">fabH</name>
    <name type="ordered locus">MGAS10270_Spy1562</name>
</gene>
<accession>Q1JFD2</accession>
<sequence length="324" mass="34776">MIFSKISQVAHYVPQQLVTNNDLASIMDTSHEWIFSRTGIAERHISRDEMTSDLAIQVADQLLTQSGLKADAIDFIIVATISPDATMPSTAAKVQAAIAATSAFAFDMTAACSGFVFALAMADKLIASGAYQNGMVIGAETLSKLVNWQDRATAVLFGDGAGGVLLEASKDKHVLAETLHTDGARCQSLISGETSLSSPYSIGKKAIATIQMDGRAIFDFAIRDVSKSILTLMAQSDITKDDIDYCLLHQANRRILDKIARKIDVPRGKFLENMMRYGNTSAASIPILLSEAVQKGQIRLDGTQKILLSGFGGGLTWGSLIVKI</sequence>
<feature type="chain" id="PRO_1000056422" description="Beta-ketoacyl-[acyl-carrier-protein] synthase III">
    <location>
        <begin position="1"/>
        <end position="324"/>
    </location>
</feature>
<feature type="region of interest" description="ACP-binding" evidence="1">
    <location>
        <begin position="250"/>
        <end position="254"/>
    </location>
</feature>
<feature type="active site" evidence="1">
    <location>
        <position position="112"/>
    </location>
</feature>
<feature type="active site" evidence="1">
    <location>
        <position position="249"/>
    </location>
</feature>
<feature type="active site" evidence="1">
    <location>
        <position position="279"/>
    </location>
</feature>
<protein>
    <recommendedName>
        <fullName evidence="1">Beta-ketoacyl-[acyl-carrier-protein] synthase III</fullName>
        <shortName evidence="1">Beta-ketoacyl-ACP synthase III</shortName>
        <shortName evidence="1">KAS III</shortName>
        <ecNumber evidence="1">2.3.1.180</ecNumber>
    </recommendedName>
    <alternativeName>
        <fullName evidence="1">3-oxoacyl-[acyl-carrier-protein] synthase 3</fullName>
    </alternativeName>
    <alternativeName>
        <fullName evidence="1">3-oxoacyl-[acyl-carrier-protein] synthase III</fullName>
    </alternativeName>
</protein>
<keyword id="KW-0012">Acyltransferase</keyword>
<keyword id="KW-0963">Cytoplasm</keyword>
<keyword id="KW-0275">Fatty acid biosynthesis</keyword>
<keyword id="KW-0276">Fatty acid metabolism</keyword>
<keyword id="KW-0444">Lipid biosynthesis</keyword>
<keyword id="KW-0443">Lipid metabolism</keyword>
<keyword id="KW-0511">Multifunctional enzyme</keyword>
<keyword id="KW-0808">Transferase</keyword>
<reference key="1">
    <citation type="journal article" date="2006" name="Proc. Natl. Acad. Sci. U.S.A.">
        <title>Molecular genetic anatomy of inter- and intraserotype variation in the human bacterial pathogen group A Streptococcus.</title>
        <authorList>
            <person name="Beres S.B."/>
            <person name="Richter E.W."/>
            <person name="Nagiec M.J."/>
            <person name="Sumby P."/>
            <person name="Porcella S.F."/>
            <person name="DeLeo F.R."/>
            <person name="Musser J.M."/>
        </authorList>
    </citation>
    <scope>NUCLEOTIDE SEQUENCE [LARGE SCALE GENOMIC DNA]</scope>
    <source>
        <strain>MGAS10270</strain>
    </source>
</reference>
<dbReference type="EC" id="2.3.1.180" evidence="1"/>
<dbReference type="EMBL" id="CP000260">
    <property type="protein sequence ID" value="ABF34627.1"/>
    <property type="molecule type" value="Genomic_DNA"/>
</dbReference>
<dbReference type="SMR" id="Q1JFD2"/>
<dbReference type="KEGG" id="sph:MGAS10270_Spy1562"/>
<dbReference type="HOGENOM" id="CLU_039592_4_1_9"/>
<dbReference type="UniPathway" id="UPA00094"/>
<dbReference type="Proteomes" id="UP000002436">
    <property type="component" value="Chromosome"/>
</dbReference>
<dbReference type="GO" id="GO:0005737">
    <property type="term" value="C:cytoplasm"/>
    <property type="evidence" value="ECO:0007669"/>
    <property type="project" value="UniProtKB-SubCell"/>
</dbReference>
<dbReference type="GO" id="GO:0004315">
    <property type="term" value="F:3-oxoacyl-[acyl-carrier-protein] synthase activity"/>
    <property type="evidence" value="ECO:0007669"/>
    <property type="project" value="InterPro"/>
</dbReference>
<dbReference type="GO" id="GO:0033818">
    <property type="term" value="F:beta-ketoacyl-acyl-carrier-protein synthase III activity"/>
    <property type="evidence" value="ECO:0007669"/>
    <property type="project" value="UniProtKB-UniRule"/>
</dbReference>
<dbReference type="GO" id="GO:0006633">
    <property type="term" value="P:fatty acid biosynthetic process"/>
    <property type="evidence" value="ECO:0007669"/>
    <property type="project" value="UniProtKB-UniRule"/>
</dbReference>
<dbReference type="CDD" id="cd00830">
    <property type="entry name" value="KAS_III"/>
    <property type="match status" value="1"/>
</dbReference>
<dbReference type="Gene3D" id="3.40.47.10">
    <property type="match status" value="1"/>
</dbReference>
<dbReference type="HAMAP" id="MF_01815">
    <property type="entry name" value="FabH"/>
    <property type="match status" value="1"/>
</dbReference>
<dbReference type="InterPro" id="IPR013747">
    <property type="entry name" value="ACP_syn_III_C"/>
</dbReference>
<dbReference type="InterPro" id="IPR013751">
    <property type="entry name" value="ACP_syn_III_N"/>
</dbReference>
<dbReference type="InterPro" id="IPR004655">
    <property type="entry name" value="FabH"/>
</dbReference>
<dbReference type="InterPro" id="IPR016039">
    <property type="entry name" value="Thiolase-like"/>
</dbReference>
<dbReference type="NCBIfam" id="TIGR00747">
    <property type="entry name" value="fabH"/>
    <property type="match status" value="1"/>
</dbReference>
<dbReference type="NCBIfam" id="NF006829">
    <property type="entry name" value="PRK09352.1"/>
    <property type="match status" value="1"/>
</dbReference>
<dbReference type="PANTHER" id="PTHR43091">
    <property type="entry name" value="3-OXOACYL-[ACYL-CARRIER-PROTEIN] SYNTHASE"/>
    <property type="match status" value="1"/>
</dbReference>
<dbReference type="PANTHER" id="PTHR43091:SF1">
    <property type="entry name" value="BETA-KETOACYL-[ACYL-CARRIER-PROTEIN] SYNTHASE III, CHLOROPLASTIC"/>
    <property type="match status" value="1"/>
</dbReference>
<dbReference type="Pfam" id="PF08545">
    <property type="entry name" value="ACP_syn_III"/>
    <property type="match status" value="1"/>
</dbReference>
<dbReference type="Pfam" id="PF08541">
    <property type="entry name" value="ACP_syn_III_C"/>
    <property type="match status" value="1"/>
</dbReference>
<dbReference type="SUPFAM" id="SSF53901">
    <property type="entry name" value="Thiolase-like"/>
    <property type="match status" value="1"/>
</dbReference>
<organism>
    <name type="scientific">Streptococcus pyogenes serotype M2 (strain MGAS10270)</name>
    <dbReference type="NCBI Taxonomy" id="370552"/>
    <lineage>
        <taxon>Bacteria</taxon>
        <taxon>Bacillati</taxon>
        <taxon>Bacillota</taxon>
        <taxon>Bacilli</taxon>
        <taxon>Lactobacillales</taxon>
        <taxon>Streptococcaceae</taxon>
        <taxon>Streptococcus</taxon>
    </lineage>
</organism>
<evidence type="ECO:0000255" key="1">
    <source>
        <dbReference type="HAMAP-Rule" id="MF_01815"/>
    </source>
</evidence>